<dbReference type="EMBL" id="Z56277">
    <property type="protein sequence ID" value="CAA91216.1"/>
    <property type="molecule type" value="mRNA"/>
</dbReference>
<dbReference type="EMBL" id="D50497">
    <property type="protein sequence ID" value="BAA09091.1"/>
    <property type="molecule type" value="mRNA"/>
</dbReference>
<dbReference type="EMBL" id="AABR07037207">
    <property type="status" value="NOT_ANNOTATED_CDS"/>
    <property type="molecule type" value="Genomic_DNA"/>
</dbReference>
<dbReference type="EMBL" id="AABR07037208">
    <property type="status" value="NOT_ANNOTATED_CDS"/>
    <property type="molecule type" value="Genomic_DNA"/>
</dbReference>
<dbReference type="RefSeq" id="NP_001401322.1">
    <molecule id="P51796-1"/>
    <property type="nucleotide sequence ID" value="NM_001414393.1"/>
</dbReference>
<dbReference type="RefSeq" id="NP_058802.2">
    <molecule id="P51796-2"/>
    <property type="nucleotide sequence ID" value="NM_017106.2"/>
</dbReference>
<dbReference type="SMR" id="P51796"/>
<dbReference type="FunCoup" id="P51796">
    <property type="interactions" value="843"/>
</dbReference>
<dbReference type="STRING" id="10116.ENSRNOP00000074459"/>
<dbReference type="PhosphoSitePlus" id="P51796"/>
<dbReference type="PaxDb" id="10116-ENSRNOP00000003895"/>
<dbReference type="ABCD" id="P51796">
    <property type="antibodies" value="2 sequenced antibodies"/>
</dbReference>
<dbReference type="Ensembl" id="ENSRNOT00000003895.7">
    <molecule id="P51796-2"/>
    <property type="protein sequence ID" value="ENSRNOP00000003895.5"/>
    <property type="gene ID" value="ENSRNOG00000002862.8"/>
</dbReference>
<dbReference type="Ensembl" id="ENSRNOT00000079054.2">
    <molecule id="P51796-1"/>
    <property type="protein sequence ID" value="ENSRNOP00000074459.1"/>
    <property type="gene ID" value="ENSRNOG00000002862.8"/>
</dbReference>
<dbReference type="GeneID" id="25749"/>
<dbReference type="KEGG" id="rno:25749"/>
<dbReference type="UCSC" id="RGD:2362">
    <molecule id="P51796-1"/>
    <property type="organism name" value="rat"/>
</dbReference>
<dbReference type="AGR" id="RGD:2362"/>
<dbReference type="CTD" id="1184"/>
<dbReference type="RGD" id="2362">
    <property type="gene designation" value="Clcn5"/>
</dbReference>
<dbReference type="eggNOG" id="KOG0475">
    <property type="taxonomic scope" value="Eukaryota"/>
</dbReference>
<dbReference type="GeneTree" id="ENSGT00940000153763"/>
<dbReference type="HOGENOM" id="CLU_003181_2_1_1"/>
<dbReference type="InParanoid" id="P51796"/>
<dbReference type="OMA" id="CLDWTPW"/>
<dbReference type="OrthoDB" id="44789at2759"/>
<dbReference type="PhylomeDB" id="P51796"/>
<dbReference type="Reactome" id="R-RNO-2672351">
    <property type="pathway name" value="Stimuli-sensing channels"/>
</dbReference>
<dbReference type="PRO" id="PR:P51796"/>
<dbReference type="Proteomes" id="UP000002494">
    <property type="component" value="Chromosome X"/>
</dbReference>
<dbReference type="Bgee" id="ENSRNOG00000002862">
    <property type="expression patterns" value="Expressed in adult mammalian kidney and 19 other cell types or tissues"/>
</dbReference>
<dbReference type="ExpressionAtlas" id="P51796">
    <property type="expression patterns" value="baseline and differential"/>
</dbReference>
<dbReference type="GO" id="GO:0045177">
    <property type="term" value="C:apical part of cell"/>
    <property type="evidence" value="ECO:0000250"/>
    <property type="project" value="UniProtKB"/>
</dbReference>
<dbReference type="GO" id="GO:0005829">
    <property type="term" value="C:cytosol"/>
    <property type="evidence" value="ECO:0007669"/>
    <property type="project" value="Ensembl"/>
</dbReference>
<dbReference type="GO" id="GO:0005769">
    <property type="term" value="C:early endosome"/>
    <property type="evidence" value="ECO:0000318"/>
    <property type="project" value="GO_Central"/>
</dbReference>
<dbReference type="GO" id="GO:0005768">
    <property type="term" value="C:endosome"/>
    <property type="evidence" value="ECO:0000314"/>
    <property type="project" value="RGD"/>
</dbReference>
<dbReference type="GO" id="GO:0010008">
    <property type="term" value="C:endosome membrane"/>
    <property type="evidence" value="ECO:0007669"/>
    <property type="project" value="UniProtKB-SubCell"/>
</dbReference>
<dbReference type="GO" id="GO:0005794">
    <property type="term" value="C:Golgi apparatus"/>
    <property type="evidence" value="ECO:0000318"/>
    <property type="project" value="GO_Central"/>
</dbReference>
<dbReference type="GO" id="GO:0000139">
    <property type="term" value="C:Golgi membrane"/>
    <property type="evidence" value="ECO:0007669"/>
    <property type="project" value="UniProtKB-SubCell"/>
</dbReference>
<dbReference type="GO" id="GO:0016020">
    <property type="term" value="C:membrane"/>
    <property type="evidence" value="ECO:0000314"/>
    <property type="project" value="UniProtKB"/>
</dbReference>
<dbReference type="GO" id="GO:0005886">
    <property type="term" value="C:plasma membrane"/>
    <property type="evidence" value="ECO:0000318"/>
    <property type="project" value="GO_Central"/>
</dbReference>
<dbReference type="GO" id="GO:0008021">
    <property type="term" value="C:synaptic vesicle"/>
    <property type="evidence" value="ECO:0000318"/>
    <property type="project" value="GO_Central"/>
</dbReference>
<dbReference type="GO" id="GO:0015297">
    <property type="term" value="F:antiporter activity"/>
    <property type="evidence" value="ECO:0007669"/>
    <property type="project" value="UniProtKB-KW"/>
</dbReference>
<dbReference type="GO" id="GO:0005524">
    <property type="term" value="F:ATP binding"/>
    <property type="evidence" value="ECO:0007669"/>
    <property type="project" value="UniProtKB-KW"/>
</dbReference>
<dbReference type="GO" id="GO:0042802">
    <property type="term" value="F:identical protein binding"/>
    <property type="evidence" value="ECO:0000266"/>
    <property type="project" value="RGD"/>
</dbReference>
<dbReference type="GO" id="GO:0005247">
    <property type="term" value="F:voltage-gated chloride channel activity"/>
    <property type="evidence" value="ECO:0000314"/>
    <property type="project" value="RGD"/>
</dbReference>
<dbReference type="GO" id="GO:0006821">
    <property type="term" value="P:chloride transport"/>
    <property type="evidence" value="ECO:0000314"/>
    <property type="project" value="RGD"/>
</dbReference>
<dbReference type="GO" id="GO:0006897">
    <property type="term" value="P:endocytosis"/>
    <property type="evidence" value="ECO:0000266"/>
    <property type="project" value="RGD"/>
</dbReference>
<dbReference type="GO" id="GO:0003014">
    <property type="term" value="P:renal system process"/>
    <property type="evidence" value="ECO:0000266"/>
    <property type="project" value="RGD"/>
</dbReference>
<dbReference type="CDD" id="cd04591">
    <property type="entry name" value="CBS_pair_voltage-gated_CLC_euk_bac"/>
    <property type="match status" value="1"/>
</dbReference>
<dbReference type="CDD" id="cd03684">
    <property type="entry name" value="ClC_3_like"/>
    <property type="match status" value="1"/>
</dbReference>
<dbReference type="FunFam" id="3.10.580.20:FF:000001">
    <property type="entry name" value="Chloride channel protein"/>
    <property type="match status" value="1"/>
</dbReference>
<dbReference type="FunFam" id="3.90.1280.20:FF:000001">
    <property type="entry name" value="Chloride channel protein"/>
    <property type="match status" value="1"/>
</dbReference>
<dbReference type="FunFam" id="3.90.1280.20:FF:000002">
    <property type="entry name" value="Chloride channel protein"/>
    <property type="match status" value="1"/>
</dbReference>
<dbReference type="Gene3D" id="3.10.580.20">
    <property type="match status" value="1"/>
</dbReference>
<dbReference type="Gene3D" id="3.90.1280.20">
    <property type="match status" value="1"/>
</dbReference>
<dbReference type="Gene3D" id="1.10.3080.10">
    <property type="entry name" value="Clc chloride channel"/>
    <property type="match status" value="1"/>
</dbReference>
<dbReference type="InterPro" id="IPR000644">
    <property type="entry name" value="CBS_dom"/>
</dbReference>
<dbReference type="InterPro" id="IPR046342">
    <property type="entry name" value="CBS_dom_sf"/>
</dbReference>
<dbReference type="InterPro" id="IPR014743">
    <property type="entry name" value="Cl-channel_core"/>
</dbReference>
<dbReference type="InterPro" id="IPR002247">
    <property type="entry name" value="Cl_channel-5"/>
</dbReference>
<dbReference type="InterPro" id="IPR001807">
    <property type="entry name" value="ClC"/>
</dbReference>
<dbReference type="PANTHER" id="PTHR45711">
    <property type="entry name" value="CHLORIDE CHANNEL PROTEIN"/>
    <property type="match status" value="1"/>
</dbReference>
<dbReference type="PANTHER" id="PTHR45711:SF7">
    <property type="entry name" value="H(+)_CL(-) EXCHANGE TRANSPORTER 5"/>
    <property type="match status" value="1"/>
</dbReference>
<dbReference type="Pfam" id="PF00571">
    <property type="entry name" value="CBS"/>
    <property type="match status" value="2"/>
</dbReference>
<dbReference type="Pfam" id="PF00654">
    <property type="entry name" value="Voltage_CLC"/>
    <property type="match status" value="1"/>
</dbReference>
<dbReference type="PRINTS" id="PR00762">
    <property type="entry name" value="CLCHANNEL"/>
</dbReference>
<dbReference type="PRINTS" id="PR01116">
    <property type="entry name" value="CLCHANNEL5"/>
</dbReference>
<dbReference type="SMART" id="SM00116">
    <property type="entry name" value="CBS"/>
    <property type="match status" value="2"/>
</dbReference>
<dbReference type="SUPFAM" id="SSF54631">
    <property type="entry name" value="CBS-domain pair"/>
    <property type="match status" value="1"/>
</dbReference>
<dbReference type="SUPFAM" id="SSF81340">
    <property type="entry name" value="Clc chloride channel"/>
    <property type="match status" value="1"/>
</dbReference>
<dbReference type="PROSITE" id="PS51371">
    <property type="entry name" value="CBS"/>
    <property type="match status" value="2"/>
</dbReference>
<feature type="chain" id="PRO_0000094448" description="H(+)/Cl(-) exchange transporter 5">
    <location>
        <begin position="1"/>
        <end position="816"/>
    </location>
</feature>
<feature type="topological domain" description="Cytoplasmic" evidence="1">
    <location>
        <begin position="1"/>
        <end position="124"/>
    </location>
</feature>
<feature type="transmembrane region" description="Helical" evidence="1">
    <location>
        <begin position="125"/>
        <end position="162"/>
    </location>
</feature>
<feature type="transmembrane region" description="Helical" evidence="1">
    <location>
        <begin position="208"/>
        <end position="231"/>
    </location>
</feature>
<feature type="intramembrane region" description="Helical" evidence="1">
    <location>
        <begin position="240"/>
        <end position="247"/>
    </location>
</feature>
<feature type="transmembrane region" description="Helical" evidence="1">
    <location>
        <begin position="256"/>
        <end position="275"/>
    </location>
</feature>
<feature type="transmembrane region" description="Helical" evidence="1">
    <location>
        <begin position="281"/>
        <end position="300"/>
    </location>
</feature>
<feature type="intramembrane region" description="Helical" evidence="1">
    <location>
        <begin position="312"/>
        <end position="324"/>
    </location>
</feature>
<feature type="intramembrane region" description="Helical" evidence="1">
    <location>
        <begin position="328"/>
        <end position="336"/>
    </location>
</feature>
<feature type="transmembrane region" description="Helical" evidence="1">
    <location>
        <begin position="348"/>
        <end position="366"/>
    </location>
</feature>
<feature type="transmembrane region" description="Helical" evidence="1">
    <location>
        <begin position="389"/>
        <end position="414"/>
    </location>
</feature>
<feature type="transmembrane region" description="Helical" evidence="1">
    <location>
        <begin position="422"/>
        <end position="442"/>
    </location>
</feature>
<feature type="transmembrane region" description="Helical" evidence="1">
    <location>
        <begin position="498"/>
        <end position="518"/>
    </location>
</feature>
<feature type="transmembrane region" description="Helical" evidence="1">
    <location>
        <begin position="523"/>
        <end position="542"/>
    </location>
</feature>
<feature type="intramembrane region" description="Helical" evidence="1">
    <location>
        <begin position="570"/>
        <end position="584"/>
    </location>
</feature>
<feature type="intramembrane region" description="Note=Loop between two helices" evidence="1">
    <location>
        <begin position="585"/>
        <end position="587"/>
    </location>
</feature>
<feature type="intramembrane region" description="Helical" evidence="1">
    <location>
        <begin position="588"/>
        <end position="599"/>
    </location>
</feature>
<feature type="intramembrane region" description="Note=Loop between two helices" evidence="1">
    <location>
        <begin position="600"/>
        <end position="604"/>
    </location>
</feature>
<feature type="transmembrane region" description="Helical" evidence="1">
    <location>
        <begin position="605"/>
        <end position="622"/>
    </location>
</feature>
<feature type="topological domain" description="Cytoplasmic" evidence="1">
    <location>
        <begin position="623"/>
        <end position="816"/>
    </location>
</feature>
<feature type="domain" description="CBS 1" evidence="3">
    <location>
        <begin position="656"/>
        <end position="720"/>
    </location>
</feature>
<feature type="domain" description="CBS 2" evidence="3">
    <location>
        <begin position="752"/>
        <end position="811"/>
    </location>
</feature>
<feature type="short sequence motif" description="Selectivity filter part_1" evidence="1">
    <location>
        <begin position="237"/>
        <end position="241"/>
    </location>
</feature>
<feature type="short sequence motif" description="Selectivity filter part_2" evidence="1">
    <location>
        <begin position="279"/>
        <end position="283"/>
    </location>
</feature>
<feature type="short sequence motif" description="Selectivity filter part_3" evidence="1">
    <location>
        <begin position="523"/>
        <end position="527"/>
    </location>
</feature>
<feature type="binding site" evidence="1">
    <location>
        <position position="238"/>
    </location>
    <ligand>
        <name>chloride</name>
        <dbReference type="ChEBI" id="CHEBI:17996"/>
    </ligand>
</feature>
<feature type="binding site" evidence="1">
    <location>
        <position position="525"/>
    </location>
    <ligand>
        <name>chloride</name>
        <dbReference type="ChEBI" id="CHEBI:17996"/>
    </ligand>
</feature>
<feature type="binding site" evidence="1">
    <location>
        <position position="628"/>
    </location>
    <ligand>
        <name>chloride</name>
        <dbReference type="ChEBI" id="CHEBI:17996"/>
    </ligand>
</feature>
<feature type="binding site" evidence="2">
    <location>
        <position position="666"/>
    </location>
    <ligand>
        <name>ATP</name>
        <dbReference type="ChEBI" id="CHEBI:30616"/>
    </ligand>
</feature>
<feature type="binding site" evidence="2">
    <location>
        <begin position="687"/>
        <end position="689"/>
    </location>
    <ligand>
        <name>ATP</name>
        <dbReference type="ChEBI" id="CHEBI:30616"/>
    </ligand>
</feature>
<feature type="binding site" evidence="2">
    <location>
        <begin position="794"/>
        <end position="797"/>
    </location>
    <ligand>
        <name>ATP</name>
        <dbReference type="ChEBI" id="CHEBI:30616"/>
    </ligand>
</feature>
<feature type="site" description="Mediates proton transfer from the outer aqueous phase to the interior of the protein; involved in linking H(+) and Cl(-) transport" evidence="1">
    <location>
        <position position="281"/>
    </location>
</feature>
<feature type="site" description="Mediates proton transfer from the protein to the inner aqueous phase" evidence="1">
    <location>
        <position position="338"/>
    </location>
</feature>
<feature type="splice variant" id="VSP_060659" description="In isoform 2." evidence="5">
    <location>
        <begin position="1"/>
        <end position="70"/>
    </location>
</feature>
<feature type="sequence conflict" description="In Ref. 2; BAA09091." evidence="5" ref="2">
    <original>H</original>
    <variation>Y</variation>
    <location>
        <position position="385"/>
    </location>
</feature>
<evidence type="ECO:0000250" key="1"/>
<evidence type="ECO:0000250" key="2">
    <source>
        <dbReference type="UniProtKB" id="P51795"/>
    </source>
</evidence>
<evidence type="ECO:0000255" key="3">
    <source>
        <dbReference type="PROSITE-ProRule" id="PRU00703"/>
    </source>
</evidence>
<evidence type="ECO:0000269" key="4">
    <source>
    </source>
</evidence>
<evidence type="ECO:0000305" key="5"/>
<organism>
    <name type="scientific">Rattus norvegicus</name>
    <name type="common">Rat</name>
    <dbReference type="NCBI Taxonomy" id="10116"/>
    <lineage>
        <taxon>Eukaryota</taxon>
        <taxon>Metazoa</taxon>
        <taxon>Chordata</taxon>
        <taxon>Craniata</taxon>
        <taxon>Vertebrata</taxon>
        <taxon>Euteleostomi</taxon>
        <taxon>Mammalia</taxon>
        <taxon>Eutheria</taxon>
        <taxon>Euarchontoglires</taxon>
        <taxon>Glires</taxon>
        <taxon>Rodentia</taxon>
        <taxon>Myomorpha</taxon>
        <taxon>Muroidea</taxon>
        <taxon>Muridae</taxon>
        <taxon>Murinae</taxon>
        <taxon>Rattus</taxon>
    </lineage>
</organism>
<accession>P51796</accession>
<accession>A0A0G2K839</accession>
<accession>P70642</accession>
<name>CLCN5_RAT</name>
<comment type="function">
    <text evidence="2 4 5">Proton-coupled chloride transporter. Functions as antiport system and exchanges chloride ions against protons. Important for normal acidification of the endosome lumen. May play an important role in renal tubular function (By similarity). The CLC channel family contains both chloride channels and proton-coupled anion transporters that exchange chloride or another anion for protons. The absence of conserved gating glutamate residues is typical for family members that function as channels (Probable).</text>
</comment>
<comment type="catalytic activity">
    <reaction evidence="2">
        <text>2 chloride(in) + H(+)(out) = 2 chloride(out) + H(+)(in)</text>
        <dbReference type="Rhea" id="RHEA:29567"/>
        <dbReference type="ChEBI" id="CHEBI:15378"/>
        <dbReference type="ChEBI" id="CHEBI:17996"/>
    </reaction>
</comment>
<comment type="subunit">
    <text evidence="2">Interacts with NEDD4 and NEDD4L.</text>
</comment>
<comment type="subcellular location">
    <subcellularLocation>
        <location evidence="2">Golgi apparatus membrane</location>
        <topology evidence="2">Multi-pass membrane protein</topology>
    </subcellularLocation>
    <subcellularLocation>
        <location evidence="2">Endosome membrane</location>
        <topology evidence="2">Multi-pass membrane protein</topology>
    </subcellularLocation>
    <subcellularLocation>
        <location evidence="2">Cell membrane</location>
        <topology evidence="2">Multi-pass membrane protein</topology>
    </subcellularLocation>
</comment>
<comment type="alternative products">
    <event type="alternative splicing"/>
    <isoform>
        <id>P51796-1</id>
        <name>1</name>
        <sequence type="displayed"/>
    </isoform>
    <isoform>
        <id>P51796-2</id>
        <name>2</name>
        <sequence type="described" ref="VSP_060659"/>
    </isoform>
</comment>
<comment type="tissue specificity">
    <text>Kidney specific.</text>
</comment>
<comment type="PTM">
    <text evidence="2">Ubiquitinated by NEDD4L in the presence of albumin; which promotes endocytosis and proteasomal degradation.</text>
</comment>
<comment type="similarity">
    <text evidence="5">Belongs to the chloride channel (TC 2.A.49) family. ClC-5/CLCN5 subfamily.</text>
</comment>
<sequence>MAMWQGAMDNRGFHQGSFSSFQSSSSDEDLMDIPGTAMDFSMRDDVPPLDREIEGNKSYNGGGIGSSNRIMDFLEEPIPGVGTYDDFNTIDWVREKSRDRDRHREITNKSKESTWALIHSVSDAFSGWLLMLLIGLLSGSLAGLIDISAHWMTDLKEGICTGGFWFNHEHCCWNSEHVTFEDRDKCPEWNSWSQLIISTDQGAFAYIVNYFMYVLWALLFAFLAVSLVKAFAPYACGSGIPEIKTILSGFIIRGYLGKWTLVIKTITLVLAVSSGLSLGKEGPLVHVACCCGNILCHCFNKYRKNEAKRREVLSAAAAAGVSVAFGAPIGGVLFSLEEVSYYFPLKTLWRSFFAALVAAFTLRSINPFGNSRLVLFYVEFHTPWHLFELVPFIVLGIFGGLWGALFIRTNIAWCRKRKTTQLGKYPVVEVLIVTAITAILAFPNEYTRMSTSELISELFNDCGLLDSSKLCDYENHFNTSKGGELPDRPAGVGVYSAMWQLALTLILKIVITIFTFGMKIPSGLFIPSMAVGAIAGRLLGVGMEQLAYYHHDWGIFNSWCSQGADCITPGLYAMVGAAACLGGVTRMTVSLVVIMFELTGGLEYIVPLMAAAMTSKWVADALGREGIYDAHIRLNGYPFLEAKEEFAHKTLAMDVMKPRRNDPLLTVLTQDSMTVEDVETIISETTYSGFPVVVSRESQRLVGFVLRRDLIISIENARKKQDGVVSTSIIYFTEHSPPMPPYTPPTLKLRNILDLSPFTVTDLTPMEIVVDIFRKLGLRQCLVTHNGRLLGIITKKDVLKHIAQMANQDPESILFN</sequence>
<keyword id="KW-0025">Alternative splicing</keyword>
<keyword id="KW-0050">Antiport</keyword>
<keyword id="KW-0067">ATP-binding</keyword>
<keyword id="KW-0129">CBS domain</keyword>
<keyword id="KW-1003">Cell membrane</keyword>
<keyword id="KW-0868">Chloride</keyword>
<keyword id="KW-0967">Endosome</keyword>
<keyword id="KW-0333">Golgi apparatus</keyword>
<keyword id="KW-0406">Ion transport</keyword>
<keyword id="KW-0472">Membrane</keyword>
<keyword id="KW-0547">Nucleotide-binding</keyword>
<keyword id="KW-1185">Reference proteome</keyword>
<keyword id="KW-0677">Repeat</keyword>
<keyword id="KW-0812">Transmembrane</keyword>
<keyword id="KW-1133">Transmembrane helix</keyword>
<keyword id="KW-0813">Transport</keyword>
<keyword id="KW-0832">Ubl conjugation</keyword>
<gene>
    <name type="primary">Clcn5</name>
</gene>
<reference key="1">
    <citation type="journal article" date="1995" name="J. Biol. Chem.">
        <title>Cloning and functional expression of rat CLC-5, a chloride channel related to kidney disease.</title>
        <authorList>
            <person name="Steinmeyer K."/>
            <person name="Schwappach B."/>
            <person name="Bens M."/>
            <person name="Vandewalle A."/>
            <person name="Jentsch T.J."/>
        </authorList>
    </citation>
    <scope>NUCLEOTIDE SEQUENCE [MRNA] (ISOFORM 2)</scope>
    <source>
        <tissue>Brain</tissue>
    </source>
</reference>
<reference key="2">
    <citation type="journal article" date="1996" name="J. Biol. Chem.">
        <title>Identification of a new outwardly rectifying Cl- channel that belongs to a subfamily of the ClC Cl- channels.</title>
        <authorList>
            <person name="Sakamoto H."/>
            <person name="Kawasaki M."/>
            <person name="Uchida S."/>
            <person name="Sasaki S."/>
            <person name="Marumo F."/>
        </authorList>
    </citation>
    <scope>NUCLEOTIDE SEQUENCE [MRNA] (ISOFORM 2)</scope>
    <source>
        <tissue>Kidney</tissue>
    </source>
</reference>
<reference key="3">
    <citation type="journal article" date="2004" name="Nature">
        <title>Genome sequence of the Brown Norway rat yields insights into mammalian evolution.</title>
        <authorList>
            <person name="Gibbs R.A."/>
            <person name="Weinstock G.M."/>
            <person name="Metzker M.L."/>
            <person name="Muzny D.M."/>
            <person name="Sodergren E.J."/>
            <person name="Scherer S."/>
            <person name="Scott G."/>
            <person name="Steffen D."/>
            <person name="Worley K.C."/>
            <person name="Burch P.E."/>
            <person name="Okwuonu G."/>
            <person name="Hines S."/>
            <person name="Lewis L."/>
            <person name="Deramo C."/>
            <person name="Delgado O."/>
            <person name="Dugan-Rocha S."/>
            <person name="Miner G."/>
            <person name="Morgan M."/>
            <person name="Hawes A."/>
            <person name="Gill R."/>
            <person name="Holt R.A."/>
            <person name="Adams M.D."/>
            <person name="Amanatides P.G."/>
            <person name="Baden-Tillson H."/>
            <person name="Barnstead M."/>
            <person name="Chin S."/>
            <person name="Evans C.A."/>
            <person name="Ferriera S."/>
            <person name="Fosler C."/>
            <person name="Glodek A."/>
            <person name="Gu Z."/>
            <person name="Jennings D."/>
            <person name="Kraft C.L."/>
            <person name="Nguyen T."/>
            <person name="Pfannkoch C.M."/>
            <person name="Sitter C."/>
            <person name="Sutton G.G."/>
            <person name="Venter J.C."/>
            <person name="Woodage T."/>
            <person name="Smith D."/>
            <person name="Lee H.-M."/>
            <person name="Gustafson E."/>
            <person name="Cahill P."/>
            <person name="Kana A."/>
            <person name="Doucette-Stamm L."/>
            <person name="Weinstock K."/>
            <person name="Fechtel K."/>
            <person name="Weiss R.B."/>
            <person name="Dunn D.M."/>
            <person name="Green E.D."/>
            <person name="Blakesley R.W."/>
            <person name="Bouffard G.G."/>
            <person name="De Jong P.J."/>
            <person name="Osoegawa K."/>
            <person name="Zhu B."/>
            <person name="Marra M."/>
            <person name="Schein J."/>
            <person name="Bosdet I."/>
            <person name="Fjell C."/>
            <person name="Jones S."/>
            <person name="Krzywinski M."/>
            <person name="Mathewson C."/>
            <person name="Siddiqui A."/>
            <person name="Wye N."/>
            <person name="McPherson J."/>
            <person name="Zhao S."/>
            <person name="Fraser C.M."/>
            <person name="Shetty J."/>
            <person name="Shatsman S."/>
            <person name="Geer K."/>
            <person name="Chen Y."/>
            <person name="Abramzon S."/>
            <person name="Nierman W.C."/>
            <person name="Havlak P.H."/>
            <person name="Chen R."/>
            <person name="Durbin K.J."/>
            <person name="Egan A."/>
            <person name="Ren Y."/>
            <person name="Song X.-Z."/>
            <person name="Li B."/>
            <person name="Liu Y."/>
            <person name="Qin X."/>
            <person name="Cawley S."/>
            <person name="Cooney A.J."/>
            <person name="D'Souza L.M."/>
            <person name="Martin K."/>
            <person name="Wu J.Q."/>
            <person name="Gonzalez-Garay M.L."/>
            <person name="Jackson A.R."/>
            <person name="Kalafus K.J."/>
            <person name="McLeod M.P."/>
            <person name="Milosavljevic A."/>
            <person name="Virk D."/>
            <person name="Volkov A."/>
            <person name="Wheeler D.A."/>
            <person name="Zhang Z."/>
            <person name="Bailey J.A."/>
            <person name="Eichler E.E."/>
            <person name="Tuzun E."/>
            <person name="Birney E."/>
            <person name="Mongin E."/>
            <person name="Ureta-Vidal A."/>
            <person name="Woodwark C."/>
            <person name="Zdobnov E."/>
            <person name="Bork P."/>
            <person name="Suyama M."/>
            <person name="Torrents D."/>
            <person name="Alexandersson M."/>
            <person name="Trask B.J."/>
            <person name="Young J.M."/>
            <person name="Huang H."/>
            <person name="Wang H."/>
            <person name="Xing H."/>
            <person name="Daniels S."/>
            <person name="Gietzen D."/>
            <person name="Schmidt J."/>
            <person name="Stevens K."/>
            <person name="Vitt U."/>
            <person name="Wingrove J."/>
            <person name="Camara F."/>
            <person name="Mar Alba M."/>
            <person name="Abril J.F."/>
            <person name="Guigo R."/>
            <person name="Smit A."/>
            <person name="Dubchak I."/>
            <person name="Rubin E.M."/>
            <person name="Couronne O."/>
            <person name="Poliakov A."/>
            <person name="Huebner N."/>
            <person name="Ganten D."/>
            <person name="Goesele C."/>
            <person name="Hummel O."/>
            <person name="Kreitler T."/>
            <person name="Lee Y.-A."/>
            <person name="Monti J."/>
            <person name="Schulz H."/>
            <person name="Zimdahl H."/>
            <person name="Himmelbauer H."/>
            <person name="Lehrach H."/>
            <person name="Jacob H.J."/>
            <person name="Bromberg S."/>
            <person name="Gullings-Handley J."/>
            <person name="Jensen-Seaman M.I."/>
            <person name="Kwitek A.E."/>
            <person name="Lazar J."/>
            <person name="Pasko D."/>
            <person name="Tonellato P.J."/>
            <person name="Twigger S."/>
            <person name="Ponting C.P."/>
            <person name="Duarte J.M."/>
            <person name="Rice S."/>
            <person name="Goodstadt L."/>
            <person name="Beatson S.A."/>
            <person name="Emes R.D."/>
            <person name="Winter E.E."/>
            <person name="Webber C."/>
            <person name="Brandt P."/>
            <person name="Nyakatura G."/>
            <person name="Adetobi M."/>
            <person name="Chiaromonte F."/>
            <person name="Elnitski L."/>
            <person name="Eswara P."/>
            <person name="Hardison R.C."/>
            <person name="Hou M."/>
            <person name="Kolbe D."/>
            <person name="Makova K."/>
            <person name="Miller W."/>
            <person name="Nekrutenko A."/>
            <person name="Riemer C."/>
            <person name="Schwartz S."/>
            <person name="Taylor J."/>
            <person name="Yang S."/>
            <person name="Zhang Y."/>
            <person name="Lindpaintner K."/>
            <person name="Andrews T.D."/>
            <person name="Caccamo M."/>
            <person name="Clamp M."/>
            <person name="Clarke L."/>
            <person name="Curwen V."/>
            <person name="Durbin R.M."/>
            <person name="Eyras E."/>
            <person name="Searle S.M."/>
            <person name="Cooper G.M."/>
            <person name="Batzoglou S."/>
            <person name="Brudno M."/>
            <person name="Sidow A."/>
            <person name="Stone E.A."/>
            <person name="Payseur B.A."/>
            <person name="Bourque G."/>
            <person name="Lopez-Otin C."/>
            <person name="Puente X.S."/>
            <person name="Chakrabarti K."/>
            <person name="Chatterji S."/>
            <person name="Dewey C."/>
            <person name="Pachter L."/>
            <person name="Bray N."/>
            <person name="Yap V.B."/>
            <person name="Caspi A."/>
            <person name="Tesler G."/>
            <person name="Pevzner P.A."/>
            <person name="Haussler D."/>
            <person name="Roskin K.M."/>
            <person name="Baertsch R."/>
            <person name="Clawson H."/>
            <person name="Furey T.S."/>
            <person name="Hinrichs A.S."/>
            <person name="Karolchik D."/>
            <person name="Kent W.J."/>
            <person name="Rosenbloom K.R."/>
            <person name="Trumbower H."/>
            <person name="Weirauch M."/>
            <person name="Cooper D.N."/>
            <person name="Stenson P.D."/>
            <person name="Ma B."/>
            <person name="Brent M."/>
            <person name="Arumugam M."/>
            <person name="Shteynberg D."/>
            <person name="Copley R.R."/>
            <person name="Taylor M.S."/>
            <person name="Riethman H."/>
            <person name="Mudunuri U."/>
            <person name="Peterson J."/>
            <person name="Guyer M."/>
            <person name="Felsenfeld A."/>
            <person name="Old S."/>
            <person name="Mockrin S."/>
            <person name="Collins F.S."/>
        </authorList>
    </citation>
    <scope>NUCLEOTIDE SEQUENCE [LARGE SCALE GENOMIC DNA]</scope>
    <source>
        <strain>Brown Norway</strain>
    </source>
</reference>
<reference key="4">
    <citation type="journal article" date="2009" name="J. Biol. Chem.">
        <title>Residues important for nitrate/proton coupling in plant and mammalian CLC transporters.</title>
        <authorList>
            <person name="Bergsdorf E.-Y."/>
            <person name="Zdebik A.A."/>
            <person name="Jentsch T.J."/>
        </authorList>
    </citation>
    <scope>FUNCTION</scope>
</reference>
<proteinExistence type="evidence at transcript level"/>
<protein>
    <recommendedName>
        <fullName>H(+)/Cl(-) exchange transporter 5</fullName>
    </recommendedName>
    <alternativeName>
        <fullName>Chloride channel protein 5</fullName>
        <shortName>ClC-5</shortName>
    </alternativeName>
    <alternativeName>
        <fullName>Chloride transporter ClC-5</fullName>
    </alternativeName>
</protein>